<organism>
    <name type="scientific">Desulfitobacterium hafniense (strain Y51)</name>
    <dbReference type="NCBI Taxonomy" id="138119"/>
    <lineage>
        <taxon>Bacteria</taxon>
        <taxon>Bacillati</taxon>
        <taxon>Bacillota</taxon>
        <taxon>Clostridia</taxon>
        <taxon>Eubacteriales</taxon>
        <taxon>Desulfitobacteriaceae</taxon>
        <taxon>Desulfitobacterium</taxon>
    </lineage>
</organism>
<comment type="catalytic activity">
    <reaction evidence="1">
        <text>tRNA(Arg) + L-arginine + ATP = L-arginyl-tRNA(Arg) + AMP + diphosphate</text>
        <dbReference type="Rhea" id="RHEA:20301"/>
        <dbReference type="Rhea" id="RHEA-COMP:9658"/>
        <dbReference type="Rhea" id="RHEA-COMP:9673"/>
        <dbReference type="ChEBI" id="CHEBI:30616"/>
        <dbReference type="ChEBI" id="CHEBI:32682"/>
        <dbReference type="ChEBI" id="CHEBI:33019"/>
        <dbReference type="ChEBI" id="CHEBI:78442"/>
        <dbReference type="ChEBI" id="CHEBI:78513"/>
        <dbReference type="ChEBI" id="CHEBI:456215"/>
        <dbReference type="EC" id="6.1.1.19"/>
    </reaction>
</comment>
<comment type="subunit">
    <text evidence="1">Monomer.</text>
</comment>
<comment type="subcellular location">
    <subcellularLocation>
        <location evidence="1">Cytoplasm</location>
    </subcellularLocation>
</comment>
<comment type="similarity">
    <text evidence="1">Belongs to the class-I aminoacyl-tRNA synthetase family.</text>
</comment>
<accession>Q24MK7</accession>
<feature type="chain" id="PRO_1000018020" description="Arginine--tRNA ligase">
    <location>
        <begin position="1"/>
        <end position="561"/>
    </location>
</feature>
<feature type="short sequence motif" description="'HIGH' region">
    <location>
        <begin position="135"/>
        <end position="145"/>
    </location>
</feature>
<keyword id="KW-0030">Aminoacyl-tRNA synthetase</keyword>
<keyword id="KW-0067">ATP-binding</keyword>
<keyword id="KW-0963">Cytoplasm</keyword>
<keyword id="KW-0436">Ligase</keyword>
<keyword id="KW-0547">Nucleotide-binding</keyword>
<keyword id="KW-0648">Protein biosynthesis</keyword>
<keyword id="KW-1185">Reference proteome</keyword>
<reference key="1">
    <citation type="journal article" date="2006" name="J. Bacteriol.">
        <title>Complete genome sequence of the dehalorespiring bacterium Desulfitobacterium hafniense Y51 and comparison with Dehalococcoides ethenogenes 195.</title>
        <authorList>
            <person name="Nonaka H."/>
            <person name="Keresztes G."/>
            <person name="Shinoda Y."/>
            <person name="Ikenaga Y."/>
            <person name="Abe M."/>
            <person name="Naito K."/>
            <person name="Inatomi K."/>
            <person name="Furukawa K."/>
            <person name="Inui M."/>
            <person name="Yukawa H."/>
        </authorList>
    </citation>
    <scope>NUCLEOTIDE SEQUENCE [LARGE SCALE GENOMIC DNA]</scope>
    <source>
        <strain>Y51</strain>
    </source>
</reference>
<protein>
    <recommendedName>
        <fullName evidence="1">Arginine--tRNA ligase</fullName>
        <ecNumber evidence="1">6.1.1.19</ecNumber>
    </recommendedName>
    <alternativeName>
        <fullName evidence="1">Arginyl-tRNA synthetase</fullName>
        <shortName evidence="1">ArgRS</shortName>
    </alternativeName>
</protein>
<gene>
    <name evidence="1" type="primary">argS</name>
    <name type="ordered locus">DSY4946</name>
</gene>
<sequence length="561" mass="63140">MSLYINIKDTIYANLAKAALEAQKAGELSFESLPNYVLEEPREKQHGDWATNLAMVLTKQARKAPRDIATILIKHLDTEGTFITASEIAGPGFINFRLDPNWLTGVIPEVLNLEADYGKVNLGQGKKVQVEFVSANPTGLLHMGNARGAALGDSLAALLAMAGYEVSREFYINDAGNQIYNFALSLEARYLQLMGQDVPFPEGGYHGEDLIDTVKGLIEKVGNKYLNVDQDLRREFLVRYALEEKLTSIRETLTDMGVHYDCWFSEQSLHDSGFVKDTMEKLEQQGYIYEKEGAQWLKSTLFGDEKDEVVVRGNGTPTYFAADIAYHRNKFERGFDRVINIWGADHHGHVARMKGAMSALGYDPENLQIILMQLVRLIQNGEVVRMSKRSGQYITLRELMDEVGKDAARFFFIMRDPDSTVEFDLDLAKAESSDNPVYYVQYAHARLCSILRQAAEQGYNTAGIPQEGELKRLQSNEERELLKKIAELPNEIEVAARLTEPHRLARYVLDLAGLFHSFYNSQRVLVDEEGLREARLGLVRSTKQVLANVLGILGVTAPERM</sequence>
<name>SYR_DESHY</name>
<evidence type="ECO:0000255" key="1">
    <source>
        <dbReference type="HAMAP-Rule" id="MF_00123"/>
    </source>
</evidence>
<proteinExistence type="inferred from homology"/>
<dbReference type="EC" id="6.1.1.19" evidence="1"/>
<dbReference type="EMBL" id="AP008230">
    <property type="protein sequence ID" value="BAE86735.1"/>
    <property type="molecule type" value="Genomic_DNA"/>
</dbReference>
<dbReference type="RefSeq" id="WP_011462258.1">
    <property type="nucleotide sequence ID" value="NC_007907.1"/>
</dbReference>
<dbReference type="SMR" id="Q24MK7"/>
<dbReference type="STRING" id="138119.DSY4946"/>
<dbReference type="KEGG" id="dsy:DSY4946"/>
<dbReference type="eggNOG" id="COG0018">
    <property type="taxonomic scope" value="Bacteria"/>
</dbReference>
<dbReference type="HOGENOM" id="CLU_006406_0_1_9"/>
<dbReference type="Proteomes" id="UP000001946">
    <property type="component" value="Chromosome"/>
</dbReference>
<dbReference type="GO" id="GO:0005737">
    <property type="term" value="C:cytoplasm"/>
    <property type="evidence" value="ECO:0007669"/>
    <property type="project" value="UniProtKB-SubCell"/>
</dbReference>
<dbReference type="GO" id="GO:0004814">
    <property type="term" value="F:arginine-tRNA ligase activity"/>
    <property type="evidence" value="ECO:0007669"/>
    <property type="project" value="UniProtKB-UniRule"/>
</dbReference>
<dbReference type="GO" id="GO:0005524">
    <property type="term" value="F:ATP binding"/>
    <property type="evidence" value="ECO:0007669"/>
    <property type="project" value="UniProtKB-UniRule"/>
</dbReference>
<dbReference type="GO" id="GO:0006420">
    <property type="term" value="P:arginyl-tRNA aminoacylation"/>
    <property type="evidence" value="ECO:0007669"/>
    <property type="project" value="UniProtKB-UniRule"/>
</dbReference>
<dbReference type="CDD" id="cd07956">
    <property type="entry name" value="Anticodon_Ia_Arg"/>
    <property type="match status" value="1"/>
</dbReference>
<dbReference type="CDD" id="cd00671">
    <property type="entry name" value="ArgRS_core"/>
    <property type="match status" value="1"/>
</dbReference>
<dbReference type="FunFam" id="1.10.730.10:FF:000008">
    <property type="entry name" value="Arginine--tRNA ligase"/>
    <property type="match status" value="1"/>
</dbReference>
<dbReference type="FunFam" id="3.30.1360.70:FF:000003">
    <property type="entry name" value="Arginine--tRNA ligase"/>
    <property type="match status" value="1"/>
</dbReference>
<dbReference type="FunFam" id="3.40.50.620:FF:000062">
    <property type="entry name" value="Arginine--tRNA ligase"/>
    <property type="match status" value="1"/>
</dbReference>
<dbReference type="Gene3D" id="3.30.1360.70">
    <property type="entry name" value="Arginyl tRNA synthetase N-terminal domain"/>
    <property type="match status" value="1"/>
</dbReference>
<dbReference type="Gene3D" id="3.40.50.620">
    <property type="entry name" value="HUPs"/>
    <property type="match status" value="1"/>
</dbReference>
<dbReference type="Gene3D" id="1.10.730.10">
    <property type="entry name" value="Isoleucyl-tRNA Synthetase, Domain 1"/>
    <property type="match status" value="1"/>
</dbReference>
<dbReference type="HAMAP" id="MF_00123">
    <property type="entry name" value="Arg_tRNA_synth"/>
    <property type="match status" value="1"/>
</dbReference>
<dbReference type="InterPro" id="IPR001412">
    <property type="entry name" value="aa-tRNA-synth_I_CS"/>
</dbReference>
<dbReference type="InterPro" id="IPR001278">
    <property type="entry name" value="Arg-tRNA-ligase"/>
</dbReference>
<dbReference type="InterPro" id="IPR005148">
    <property type="entry name" value="Arg-tRNA-synth_N"/>
</dbReference>
<dbReference type="InterPro" id="IPR036695">
    <property type="entry name" value="Arg-tRNA-synth_N_sf"/>
</dbReference>
<dbReference type="InterPro" id="IPR035684">
    <property type="entry name" value="ArgRS_core"/>
</dbReference>
<dbReference type="InterPro" id="IPR008909">
    <property type="entry name" value="DALR_anticod-bd"/>
</dbReference>
<dbReference type="InterPro" id="IPR014729">
    <property type="entry name" value="Rossmann-like_a/b/a_fold"/>
</dbReference>
<dbReference type="InterPro" id="IPR009080">
    <property type="entry name" value="tRNAsynth_Ia_anticodon-bd"/>
</dbReference>
<dbReference type="NCBIfam" id="TIGR00456">
    <property type="entry name" value="argS"/>
    <property type="match status" value="1"/>
</dbReference>
<dbReference type="PANTHER" id="PTHR11956:SF5">
    <property type="entry name" value="ARGININE--TRNA LIGASE, CYTOPLASMIC"/>
    <property type="match status" value="1"/>
</dbReference>
<dbReference type="PANTHER" id="PTHR11956">
    <property type="entry name" value="ARGINYL-TRNA SYNTHETASE"/>
    <property type="match status" value="1"/>
</dbReference>
<dbReference type="Pfam" id="PF03485">
    <property type="entry name" value="Arg_tRNA_synt_N"/>
    <property type="match status" value="1"/>
</dbReference>
<dbReference type="Pfam" id="PF05746">
    <property type="entry name" value="DALR_1"/>
    <property type="match status" value="1"/>
</dbReference>
<dbReference type="Pfam" id="PF00750">
    <property type="entry name" value="tRNA-synt_1d"/>
    <property type="match status" value="1"/>
</dbReference>
<dbReference type="PRINTS" id="PR01038">
    <property type="entry name" value="TRNASYNTHARG"/>
</dbReference>
<dbReference type="SMART" id="SM01016">
    <property type="entry name" value="Arg_tRNA_synt_N"/>
    <property type="match status" value="1"/>
</dbReference>
<dbReference type="SMART" id="SM00836">
    <property type="entry name" value="DALR_1"/>
    <property type="match status" value="1"/>
</dbReference>
<dbReference type="SUPFAM" id="SSF47323">
    <property type="entry name" value="Anticodon-binding domain of a subclass of class I aminoacyl-tRNA synthetases"/>
    <property type="match status" value="1"/>
</dbReference>
<dbReference type="SUPFAM" id="SSF55190">
    <property type="entry name" value="Arginyl-tRNA synthetase (ArgRS), N-terminal 'additional' domain"/>
    <property type="match status" value="1"/>
</dbReference>
<dbReference type="SUPFAM" id="SSF52374">
    <property type="entry name" value="Nucleotidylyl transferase"/>
    <property type="match status" value="1"/>
</dbReference>
<dbReference type="PROSITE" id="PS00178">
    <property type="entry name" value="AA_TRNA_LIGASE_I"/>
    <property type="match status" value="1"/>
</dbReference>